<protein>
    <recommendedName>
        <fullName>ORC1-type DNA replication protein 3</fullName>
    </recommendedName>
</protein>
<feature type="chain" id="PRO_0000428865" description="ORC1-type DNA replication protein 3">
    <location>
        <begin position="1"/>
        <end position="110"/>
    </location>
</feature>
<feature type="binding site" evidence="1">
    <location>
        <begin position="8"/>
        <end position="12"/>
    </location>
    <ligand>
        <name>ATP</name>
        <dbReference type="ChEBI" id="CHEBI:30616"/>
    </ligand>
</feature>
<name>CDC63_HALSA</name>
<reference key="1">
    <citation type="journal article" date="2000" name="Proc. Natl. Acad. Sci. U.S.A.">
        <title>Genome sequence of Halobacterium species NRC-1.</title>
        <authorList>
            <person name="Ng W.V."/>
            <person name="Kennedy S.P."/>
            <person name="Mahairas G.G."/>
            <person name="Berquist B."/>
            <person name="Pan M."/>
            <person name="Shukla H.D."/>
            <person name="Lasky S.R."/>
            <person name="Baliga N.S."/>
            <person name="Thorsson V."/>
            <person name="Sbrogna J."/>
            <person name="Swartzell S."/>
            <person name="Weir D."/>
            <person name="Hall J."/>
            <person name="Dahl T.A."/>
            <person name="Welti R."/>
            <person name="Goo Y.A."/>
            <person name="Leithauser B."/>
            <person name="Keller K."/>
            <person name="Cruz R."/>
            <person name="Danson M.J."/>
            <person name="Hough D.W."/>
            <person name="Maddocks D.G."/>
            <person name="Jablonski P.E."/>
            <person name="Krebs M.P."/>
            <person name="Angevine C.M."/>
            <person name="Dale H."/>
            <person name="Isenbarger T.A."/>
            <person name="Peck R.F."/>
            <person name="Pohlschroder M."/>
            <person name="Spudich J.L."/>
            <person name="Jung K.-H."/>
            <person name="Alam M."/>
            <person name="Freitas T."/>
            <person name="Hou S."/>
            <person name="Daniels C.J."/>
            <person name="Dennis P.P."/>
            <person name="Omer A.D."/>
            <person name="Ebhardt H."/>
            <person name="Lowe T.M."/>
            <person name="Liang P."/>
            <person name="Riley M."/>
            <person name="Hood L."/>
            <person name="DasSarma S."/>
        </authorList>
    </citation>
    <scope>NUCLEOTIDE SEQUENCE [LARGE SCALE GENOMIC DNA]</scope>
    <source>
        <strain>ATCC 700922 / JCM 11081 / NRC-1</strain>
        <plasmid>pNRC200</plasmid>
    </source>
</reference>
<reference key="2">
    <citation type="journal article" date="2007" name="BMC Genet.">
        <title>Essential and non-essential DNA replication genes in the model halophilic Archaeon, Halobacterium sp. NRC-1.</title>
        <authorList>
            <person name="Berquist B.R."/>
            <person name="DasSarma P."/>
            <person name="DasSarma S."/>
        </authorList>
    </citation>
    <scope>DISRUPTION PHENOTYPE</scope>
    <source>
        <strain>ATCC 700922 / JCM 11081 / NRC-1</strain>
    </source>
</reference>
<dbReference type="EMBL" id="AE004438">
    <property type="protein sequence ID" value="AAG20854.1"/>
    <property type="molecule type" value="Genomic_DNA"/>
</dbReference>
<dbReference type="SMR" id="Q9HHX2"/>
<dbReference type="KEGG" id="hal:VNG_6187G"/>
<dbReference type="PATRIC" id="fig|64091.14.peg.2208"/>
<dbReference type="HOGENOM" id="CLU_2165205_0_0_2"/>
<dbReference type="InParanoid" id="Q9HHX2"/>
<dbReference type="Proteomes" id="UP000000554">
    <property type="component" value="Plasmid pNRC200"/>
</dbReference>
<dbReference type="GO" id="GO:0005524">
    <property type="term" value="F:ATP binding"/>
    <property type="evidence" value="ECO:0007669"/>
    <property type="project" value="UniProtKB-KW"/>
</dbReference>
<dbReference type="GO" id="GO:0006260">
    <property type="term" value="P:DNA replication"/>
    <property type="evidence" value="ECO:0007669"/>
    <property type="project" value="UniProtKB-KW"/>
</dbReference>
<dbReference type="CDD" id="cd08768">
    <property type="entry name" value="Cdc6_C"/>
    <property type="match status" value="1"/>
</dbReference>
<dbReference type="Gene3D" id="1.10.10.10">
    <property type="entry name" value="Winged helix-like DNA-binding domain superfamily/Winged helix DNA-binding domain"/>
    <property type="match status" value="1"/>
</dbReference>
<dbReference type="InterPro" id="IPR015163">
    <property type="entry name" value="Cdc6_C"/>
</dbReference>
<dbReference type="InterPro" id="IPR036388">
    <property type="entry name" value="WH-like_DNA-bd_sf"/>
</dbReference>
<dbReference type="InterPro" id="IPR036390">
    <property type="entry name" value="WH_DNA-bd_sf"/>
</dbReference>
<dbReference type="Pfam" id="PF09079">
    <property type="entry name" value="Cdc6_C"/>
    <property type="match status" value="1"/>
</dbReference>
<dbReference type="SMART" id="SM01074">
    <property type="entry name" value="Cdc6_C"/>
    <property type="match status" value="1"/>
</dbReference>
<dbReference type="SUPFAM" id="SSF46785">
    <property type="entry name" value="Winged helix' DNA-binding domain"/>
    <property type="match status" value="1"/>
</dbReference>
<comment type="function">
    <text evidence="1">Involved in regulation of DNA replication.</text>
</comment>
<comment type="disruption phenotype">
    <text evidence="2">Not essential for normal growth.</text>
</comment>
<comment type="similarity">
    <text evidence="3">Belongs to the CDC6/cdc18 family.</text>
</comment>
<organism>
    <name type="scientific">Halobacterium salinarum (strain ATCC 700922 / JCM 11081 / NRC-1)</name>
    <name type="common">Halobacterium halobium</name>
    <dbReference type="NCBI Taxonomy" id="64091"/>
    <lineage>
        <taxon>Archaea</taxon>
        <taxon>Methanobacteriati</taxon>
        <taxon>Methanobacteriota</taxon>
        <taxon>Stenosarchaea group</taxon>
        <taxon>Halobacteria</taxon>
        <taxon>Halobacteriales</taxon>
        <taxon>Halobacteriaceae</taxon>
        <taxon>Halobacterium</taxon>
        <taxon>Halobacterium salinarum NRC-34001</taxon>
    </lineage>
</organism>
<keyword id="KW-0067">ATP-binding</keyword>
<keyword id="KW-0235">DNA replication</keyword>
<keyword id="KW-0547">Nucleotide-binding</keyword>
<keyword id="KW-0614">Plasmid</keyword>
<keyword id="KW-1185">Reference proteome</keyword>
<accession>Q9HHX2</accession>
<gene>
    <name type="primary">orc3</name>
    <name type="ordered locus">VNG_6187G</name>
</gene>
<geneLocation type="plasmid">
    <name>pNRC200</name>
</geneLocation>
<proteinExistence type="inferred from homology"/>
<evidence type="ECO:0000250" key="1"/>
<evidence type="ECO:0000269" key="2">
    <source>
    </source>
</evidence>
<evidence type="ECO:0000305" key="3"/>
<sequence length="110" mass="12538">MVKGTPLSGKSLLFALTRLDRNNPEKEWFRTSEIHEVYQTVARDVEVEPKGYNRALELLNKHVTTGVLESKKKERGDQGKFRSYSLQGDVESTRTGLINSTPELQTLMGW</sequence>